<keyword id="KW-0066">ATP synthesis</keyword>
<keyword id="KW-0997">Cell inner membrane</keyword>
<keyword id="KW-1003">Cell membrane</keyword>
<keyword id="KW-0138">CF(0)</keyword>
<keyword id="KW-0375">Hydrogen ion transport</keyword>
<keyword id="KW-0406">Ion transport</keyword>
<keyword id="KW-0446">Lipid-binding</keyword>
<keyword id="KW-0472">Membrane</keyword>
<keyword id="KW-1185">Reference proteome</keyword>
<keyword id="KW-0812">Transmembrane</keyword>
<keyword id="KW-1133">Transmembrane helix</keyword>
<keyword id="KW-0813">Transport</keyword>
<proteinExistence type="inferred from homology"/>
<organism>
    <name type="scientific">Acidithiobacillus ferrooxidans (strain ATCC 23270 / DSM 14882 / CIP 104768 / NCIMB 8455)</name>
    <name type="common">Ferrobacillus ferrooxidans (strain ATCC 23270)</name>
    <dbReference type="NCBI Taxonomy" id="243159"/>
    <lineage>
        <taxon>Bacteria</taxon>
        <taxon>Pseudomonadati</taxon>
        <taxon>Pseudomonadota</taxon>
        <taxon>Acidithiobacillia</taxon>
        <taxon>Acidithiobacillales</taxon>
        <taxon>Acidithiobacillaceae</taxon>
        <taxon>Acidithiobacillus</taxon>
    </lineage>
</organism>
<reference key="1">
    <citation type="journal article" date="2008" name="BMC Genomics">
        <title>Acidithiobacillus ferrooxidans metabolism: from genome sequence to industrial applications.</title>
        <authorList>
            <person name="Valdes J."/>
            <person name="Pedroso I."/>
            <person name="Quatrini R."/>
            <person name="Dodson R.J."/>
            <person name="Tettelin H."/>
            <person name="Blake R. II"/>
            <person name="Eisen J.A."/>
            <person name="Holmes D.S."/>
        </authorList>
    </citation>
    <scope>NUCLEOTIDE SEQUENCE [LARGE SCALE GENOMIC DNA]</scope>
    <source>
        <strain>ATCC 23270 / DSM 14882 / CIP 104768 / NCIMB 8455</strain>
    </source>
</reference>
<accession>B7JB89</accession>
<name>ATPL_ACIF2</name>
<dbReference type="EMBL" id="CP001219">
    <property type="protein sequence ID" value="ACK79563.1"/>
    <property type="molecule type" value="Genomic_DNA"/>
</dbReference>
<dbReference type="RefSeq" id="WP_009561114.1">
    <property type="nucleotide sequence ID" value="NC_011761.1"/>
</dbReference>
<dbReference type="SMR" id="B7JB89"/>
<dbReference type="STRING" id="243159.AFE_3208"/>
<dbReference type="PaxDb" id="243159-AFE_3208"/>
<dbReference type="GeneID" id="65282192"/>
<dbReference type="KEGG" id="afr:AFE_3208"/>
<dbReference type="eggNOG" id="ENOG5032S3K">
    <property type="taxonomic scope" value="Bacteria"/>
</dbReference>
<dbReference type="HOGENOM" id="CLU_148047_1_0_6"/>
<dbReference type="Proteomes" id="UP000001362">
    <property type="component" value="Chromosome"/>
</dbReference>
<dbReference type="GO" id="GO:0005886">
    <property type="term" value="C:plasma membrane"/>
    <property type="evidence" value="ECO:0007669"/>
    <property type="project" value="UniProtKB-SubCell"/>
</dbReference>
<dbReference type="GO" id="GO:0045259">
    <property type="term" value="C:proton-transporting ATP synthase complex"/>
    <property type="evidence" value="ECO:0007669"/>
    <property type="project" value="UniProtKB-KW"/>
</dbReference>
<dbReference type="GO" id="GO:0033177">
    <property type="term" value="C:proton-transporting two-sector ATPase complex, proton-transporting domain"/>
    <property type="evidence" value="ECO:0007669"/>
    <property type="project" value="InterPro"/>
</dbReference>
<dbReference type="GO" id="GO:0008289">
    <property type="term" value="F:lipid binding"/>
    <property type="evidence" value="ECO:0007669"/>
    <property type="project" value="UniProtKB-KW"/>
</dbReference>
<dbReference type="GO" id="GO:0046933">
    <property type="term" value="F:proton-transporting ATP synthase activity, rotational mechanism"/>
    <property type="evidence" value="ECO:0007669"/>
    <property type="project" value="UniProtKB-UniRule"/>
</dbReference>
<dbReference type="CDD" id="cd18185">
    <property type="entry name" value="ATP-synt_Fo_c_ATPE"/>
    <property type="match status" value="1"/>
</dbReference>
<dbReference type="FunFam" id="1.20.20.10:FF:000002">
    <property type="entry name" value="ATP synthase subunit c"/>
    <property type="match status" value="1"/>
</dbReference>
<dbReference type="Gene3D" id="1.20.20.10">
    <property type="entry name" value="F1F0 ATP synthase subunit C"/>
    <property type="match status" value="1"/>
</dbReference>
<dbReference type="HAMAP" id="MF_01396">
    <property type="entry name" value="ATP_synth_c_bact"/>
    <property type="match status" value="1"/>
</dbReference>
<dbReference type="InterPro" id="IPR005953">
    <property type="entry name" value="ATP_synth_csu_bac/chlpt"/>
</dbReference>
<dbReference type="InterPro" id="IPR000454">
    <property type="entry name" value="ATP_synth_F0_csu"/>
</dbReference>
<dbReference type="InterPro" id="IPR020537">
    <property type="entry name" value="ATP_synth_F0_csu_DDCD_BS"/>
</dbReference>
<dbReference type="InterPro" id="IPR038662">
    <property type="entry name" value="ATP_synth_F0_csu_sf"/>
</dbReference>
<dbReference type="InterPro" id="IPR002379">
    <property type="entry name" value="ATPase_proteolipid_c-like_dom"/>
</dbReference>
<dbReference type="InterPro" id="IPR035921">
    <property type="entry name" value="F/V-ATP_Csub_sf"/>
</dbReference>
<dbReference type="NCBIfam" id="TIGR01260">
    <property type="entry name" value="ATP_synt_c"/>
    <property type="match status" value="1"/>
</dbReference>
<dbReference type="NCBIfam" id="NF005363">
    <property type="entry name" value="PRK06876.1"/>
    <property type="match status" value="1"/>
</dbReference>
<dbReference type="Pfam" id="PF00137">
    <property type="entry name" value="ATP-synt_C"/>
    <property type="match status" value="1"/>
</dbReference>
<dbReference type="SUPFAM" id="SSF81333">
    <property type="entry name" value="F1F0 ATP synthase subunit C"/>
    <property type="match status" value="1"/>
</dbReference>
<dbReference type="PROSITE" id="PS00605">
    <property type="entry name" value="ATPASE_C"/>
    <property type="match status" value="1"/>
</dbReference>
<evidence type="ECO:0000255" key="1">
    <source>
        <dbReference type="HAMAP-Rule" id="MF_01396"/>
    </source>
</evidence>
<feature type="chain" id="PRO_1000184307" description="ATP synthase subunit c">
    <location>
        <begin position="1"/>
        <end position="84"/>
    </location>
</feature>
<feature type="transmembrane region" description="Helical" evidence="1">
    <location>
        <begin position="13"/>
        <end position="33"/>
    </location>
</feature>
<feature type="transmembrane region" description="Helical" evidence="1">
    <location>
        <begin position="56"/>
        <end position="76"/>
    </location>
</feature>
<feature type="site" description="Reversibly protonated during proton transport" evidence="1">
    <location>
        <position position="63"/>
    </location>
</feature>
<protein>
    <recommendedName>
        <fullName evidence="1">ATP synthase subunit c</fullName>
    </recommendedName>
    <alternativeName>
        <fullName evidence="1">ATP synthase F(0) sector subunit c</fullName>
    </alternativeName>
    <alternativeName>
        <fullName evidence="1">F-type ATPase subunit c</fullName>
        <shortName evidence="1">F-ATPase subunit c</shortName>
    </alternativeName>
    <alternativeName>
        <fullName evidence="1">Lipid-binding protein</fullName>
    </alternativeName>
</protein>
<comment type="function">
    <text evidence="1">F(1)F(0) ATP synthase produces ATP from ADP in the presence of a proton or sodium gradient. F-type ATPases consist of two structural domains, F(1) containing the extramembraneous catalytic core and F(0) containing the membrane proton channel, linked together by a central stalk and a peripheral stalk. During catalysis, ATP synthesis in the catalytic domain of F(1) is coupled via a rotary mechanism of the central stalk subunits to proton translocation.</text>
</comment>
<comment type="function">
    <text evidence="1">Key component of the F(0) channel; it plays a direct role in translocation across the membrane. A homomeric c-ring of between 10-14 subunits forms the central stalk rotor element with the F(1) delta and epsilon subunits.</text>
</comment>
<comment type="subunit">
    <text evidence="1">F-type ATPases have 2 components, F(1) - the catalytic core - and F(0) - the membrane proton channel. F(1) has five subunits: alpha(3), beta(3), gamma(1), delta(1), epsilon(1). F(0) has three main subunits: a(1), b(2) and c(10-14). The alpha and beta chains form an alternating ring which encloses part of the gamma chain. F(1) is attached to F(0) by a central stalk formed by the gamma and epsilon chains, while a peripheral stalk is formed by the delta and b chains.</text>
</comment>
<comment type="subcellular location">
    <subcellularLocation>
        <location evidence="1">Cell inner membrane</location>
        <topology evidence="1">Multi-pass membrane protein</topology>
    </subcellularLocation>
</comment>
<comment type="similarity">
    <text evidence="1">Belongs to the ATPase C chain family.</text>
</comment>
<sequence>MDAHTIIVAATAIAVGIIFGAAGLGSAIGWGLITSKTIEGITRQPEMRPQLLVNTFIFAGLMESFPFIILAFGFWFLFANPFLG</sequence>
<gene>
    <name evidence="1" type="primary">atpE</name>
    <name type="ordered locus">AFE_3208</name>
</gene>